<evidence type="ECO:0000255" key="1">
    <source>
        <dbReference type="PROSITE-ProRule" id="PRU00722"/>
    </source>
</evidence>
<evidence type="ECO:0000269" key="2">
    <source>
    </source>
</evidence>
<evidence type="ECO:0000269" key="3">
    <source>
    </source>
</evidence>
<evidence type="ECO:0000269" key="4">
    <source>
    </source>
</evidence>
<evidence type="ECO:0000269" key="5">
    <source>
    </source>
</evidence>
<evidence type="ECO:0000269" key="6">
    <source>
    </source>
</evidence>
<evidence type="ECO:0000269" key="7">
    <source>
    </source>
</evidence>
<evidence type="ECO:0000305" key="8"/>
<evidence type="ECO:0000312" key="9">
    <source>
        <dbReference type="PDB" id="1FLE"/>
    </source>
</evidence>
<evidence type="ECO:0000312" key="10">
    <source>
        <dbReference type="PDB" id="2REL"/>
    </source>
</evidence>
<evidence type="ECO:0000312" key="11">
    <source>
        <dbReference type="PDB" id="6ATU"/>
    </source>
</evidence>
<evidence type="ECO:0007829" key="12">
    <source>
        <dbReference type="PDB" id="1FLE"/>
    </source>
</evidence>
<evidence type="ECO:0007829" key="13">
    <source>
        <dbReference type="PDB" id="2REL"/>
    </source>
</evidence>
<accession>P19957</accession>
<accession>E1P618</accession>
<accession>Q6FG74</accession>
<sequence length="117" mass="12270">MRASSFLIVVVFLIAGTLVLEAAVTGVPVKGQDTVKGRVPFNGQDPVKGQVSVKGQDKVKAQEPVKGPVSTKPGSCPIILIRCAMLNPPNRCLKDTDCPGIKKCCEGSCGMACFVPQ</sequence>
<name>ELAF_HUMAN</name>
<proteinExistence type="evidence at protein level"/>
<gene>
    <name type="primary">PI3</name>
    <name type="synonym">WAP3</name>
    <name type="synonym">WFDC14</name>
</gene>
<keyword id="KW-0002">3D-structure</keyword>
<keyword id="KW-0903">Direct protein sequencing</keyword>
<keyword id="KW-1015">Disulfide bond</keyword>
<keyword id="KW-0646">Protease inhibitor</keyword>
<keyword id="KW-1267">Proteomics identification</keyword>
<keyword id="KW-1185">Reference proteome</keyword>
<keyword id="KW-0677">Repeat</keyword>
<keyword id="KW-0964">Secreted</keyword>
<keyword id="KW-0722">Serine protease inhibitor</keyword>
<keyword id="KW-0732">Signal</keyword>
<organism>
    <name type="scientific">Homo sapiens</name>
    <name type="common">Human</name>
    <dbReference type="NCBI Taxonomy" id="9606"/>
    <lineage>
        <taxon>Eukaryota</taxon>
        <taxon>Metazoa</taxon>
        <taxon>Chordata</taxon>
        <taxon>Craniata</taxon>
        <taxon>Vertebrata</taxon>
        <taxon>Euteleostomi</taxon>
        <taxon>Mammalia</taxon>
        <taxon>Eutheria</taxon>
        <taxon>Euarchontoglires</taxon>
        <taxon>Primates</taxon>
        <taxon>Haplorrhini</taxon>
        <taxon>Catarrhini</taxon>
        <taxon>Hominidae</taxon>
        <taxon>Homo</taxon>
    </lineage>
</organism>
<reference key="1">
    <citation type="journal article" date="1992" name="Biochem. Biophys. Res. Commun.">
        <title>Primary structure of the human elafin precursor preproelafin deduced from the nucleotide sequence of its gene and the presence of unique repetitive sequences in the prosegment.</title>
        <authorList>
            <person name="Saheki T."/>
            <person name="Ito F."/>
            <person name="Hagiwara H."/>
            <person name="Saito Y."/>
            <person name="Kuroki J."/>
            <person name="Tachibana S."/>
            <person name="Hirose S."/>
        </authorList>
    </citation>
    <scope>NUCLEOTIDE SEQUENCE [GENOMIC DNA]</scope>
</reference>
<reference key="2">
    <citation type="journal article" date="1993" name="J. Biol. Chem.">
        <title>SKALP/elafin: an elastase inhibitor from cultured human keratinocytes. Purification, cDNA sequence, and evidence for transglutaminase cross-linking.</title>
        <authorList>
            <person name="Molhuizen H.O.F."/>
            <person name="Alkemade H.A.C."/>
            <person name="Zeeuwen P.L.J.M."/>
            <person name="de Jongh G.J."/>
            <person name="Wieringa B."/>
            <person name="Schalkwijk J."/>
        </authorList>
    </citation>
    <scope>NUCLEOTIDE SEQUENCE [MRNA]</scope>
    <scope>PROTEIN SEQUENCE OF 23-48 AND 85-100</scope>
    <source>
        <tissue>Keratinocyte</tissue>
    </source>
</reference>
<reference key="3">
    <citation type="journal article" date="1993" name="Am. J. Respir. Cell Mol. Biol.">
        <title>Characterization and gene sequence of the precursor of elafin, an elastase-specific inhibitor in bronchial secretions.</title>
        <authorList>
            <person name="Sallenave J.-M."/>
            <person name="Silva A."/>
        </authorList>
    </citation>
    <scope>NUCLEOTIDE SEQUENCE [GENOMIC DNA]</scope>
    <source>
        <tissue>Placenta</tissue>
    </source>
</reference>
<reference key="4">
    <citation type="submission" date="2004-06" db="EMBL/GenBank/DDBJ databases">
        <title>Cloning of human full open reading frames in Gateway(TM) system entry vector (pDONR201).</title>
        <authorList>
            <person name="Ebert L."/>
            <person name="Schick M."/>
            <person name="Neubert P."/>
            <person name="Schatten R."/>
            <person name="Henze S."/>
            <person name="Korn B."/>
        </authorList>
    </citation>
    <scope>NUCLEOTIDE SEQUENCE [LARGE SCALE MRNA]</scope>
</reference>
<reference key="5">
    <citation type="journal article" date="2001" name="Nature">
        <title>The DNA sequence and comparative analysis of human chromosome 20.</title>
        <authorList>
            <person name="Deloukas P."/>
            <person name="Matthews L.H."/>
            <person name="Ashurst J.L."/>
            <person name="Burton J."/>
            <person name="Gilbert J.G.R."/>
            <person name="Jones M."/>
            <person name="Stavrides G."/>
            <person name="Almeida J.P."/>
            <person name="Babbage A.K."/>
            <person name="Bagguley C.L."/>
            <person name="Bailey J."/>
            <person name="Barlow K.F."/>
            <person name="Bates K.N."/>
            <person name="Beard L.M."/>
            <person name="Beare D.M."/>
            <person name="Beasley O.P."/>
            <person name="Bird C.P."/>
            <person name="Blakey S.E."/>
            <person name="Bridgeman A.M."/>
            <person name="Brown A.J."/>
            <person name="Buck D."/>
            <person name="Burrill W.D."/>
            <person name="Butler A.P."/>
            <person name="Carder C."/>
            <person name="Carter N.P."/>
            <person name="Chapman J.C."/>
            <person name="Clamp M."/>
            <person name="Clark G."/>
            <person name="Clark L.N."/>
            <person name="Clark S.Y."/>
            <person name="Clee C.M."/>
            <person name="Clegg S."/>
            <person name="Cobley V.E."/>
            <person name="Collier R.E."/>
            <person name="Connor R.E."/>
            <person name="Corby N.R."/>
            <person name="Coulson A."/>
            <person name="Coville G.J."/>
            <person name="Deadman R."/>
            <person name="Dhami P.D."/>
            <person name="Dunn M."/>
            <person name="Ellington A.G."/>
            <person name="Frankland J.A."/>
            <person name="Fraser A."/>
            <person name="French L."/>
            <person name="Garner P."/>
            <person name="Grafham D.V."/>
            <person name="Griffiths C."/>
            <person name="Griffiths M.N.D."/>
            <person name="Gwilliam R."/>
            <person name="Hall R.E."/>
            <person name="Hammond S."/>
            <person name="Harley J.L."/>
            <person name="Heath P.D."/>
            <person name="Ho S."/>
            <person name="Holden J.L."/>
            <person name="Howden P.J."/>
            <person name="Huckle E."/>
            <person name="Hunt A.R."/>
            <person name="Hunt S.E."/>
            <person name="Jekosch K."/>
            <person name="Johnson C.M."/>
            <person name="Johnson D."/>
            <person name="Kay M.P."/>
            <person name="Kimberley A.M."/>
            <person name="King A."/>
            <person name="Knights A."/>
            <person name="Laird G.K."/>
            <person name="Lawlor S."/>
            <person name="Lehvaeslaiho M.H."/>
            <person name="Leversha M.A."/>
            <person name="Lloyd C."/>
            <person name="Lloyd D.M."/>
            <person name="Lovell J.D."/>
            <person name="Marsh V.L."/>
            <person name="Martin S.L."/>
            <person name="McConnachie L.J."/>
            <person name="McLay K."/>
            <person name="McMurray A.A."/>
            <person name="Milne S.A."/>
            <person name="Mistry D."/>
            <person name="Moore M.J.F."/>
            <person name="Mullikin J.C."/>
            <person name="Nickerson T."/>
            <person name="Oliver K."/>
            <person name="Parker A."/>
            <person name="Patel R."/>
            <person name="Pearce T.A.V."/>
            <person name="Peck A.I."/>
            <person name="Phillimore B.J.C.T."/>
            <person name="Prathalingam S.R."/>
            <person name="Plumb R.W."/>
            <person name="Ramsay H."/>
            <person name="Rice C.M."/>
            <person name="Ross M.T."/>
            <person name="Scott C.E."/>
            <person name="Sehra H.K."/>
            <person name="Shownkeen R."/>
            <person name="Sims S."/>
            <person name="Skuce C.D."/>
            <person name="Smith M.L."/>
            <person name="Soderlund C."/>
            <person name="Steward C.A."/>
            <person name="Sulston J.E."/>
            <person name="Swann R.M."/>
            <person name="Sycamore N."/>
            <person name="Taylor R."/>
            <person name="Tee L."/>
            <person name="Thomas D.W."/>
            <person name="Thorpe A."/>
            <person name="Tracey A."/>
            <person name="Tromans A.C."/>
            <person name="Vaudin M."/>
            <person name="Wall M."/>
            <person name="Wallis J.M."/>
            <person name="Whitehead S.L."/>
            <person name="Whittaker P."/>
            <person name="Willey D.L."/>
            <person name="Williams L."/>
            <person name="Williams S.A."/>
            <person name="Wilming L."/>
            <person name="Wray P.W."/>
            <person name="Hubbard T."/>
            <person name="Durbin R.M."/>
            <person name="Bentley D.R."/>
            <person name="Beck S."/>
            <person name="Rogers J."/>
        </authorList>
    </citation>
    <scope>NUCLEOTIDE SEQUENCE [LARGE SCALE GENOMIC DNA]</scope>
</reference>
<reference key="6">
    <citation type="submission" date="2005-09" db="EMBL/GenBank/DDBJ databases">
        <authorList>
            <person name="Mural R.J."/>
            <person name="Istrail S."/>
            <person name="Sutton G.G."/>
            <person name="Florea L."/>
            <person name="Halpern A.L."/>
            <person name="Mobarry C.M."/>
            <person name="Lippert R."/>
            <person name="Walenz B."/>
            <person name="Shatkay H."/>
            <person name="Dew I."/>
            <person name="Miller J.R."/>
            <person name="Flanigan M.J."/>
            <person name="Edwards N.J."/>
            <person name="Bolanos R."/>
            <person name="Fasulo D."/>
            <person name="Halldorsson B.V."/>
            <person name="Hannenhalli S."/>
            <person name="Turner R."/>
            <person name="Yooseph S."/>
            <person name="Lu F."/>
            <person name="Nusskern D.R."/>
            <person name="Shue B.C."/>
            <person name="Zheng X.H."/>
            <person name="Zhong F."/>
            <person name="Delcher A.L."/>
            <person name="Huson D.H."/>
            <person name="Kravitz S.A."/>
            <person name="Mouchard L."/>
            <person name="Reinert K."/>
            <person name="Remington K.A."/>
            <person name="Clark A.G."/>
            <person name="Waterman M.S."/>
            <person name="Eichler E.E."/>
            <person name="Adams M.D."/>
            <person name="Hunkapiller M.W."/>
            <person name="Myers E.W."/>
            <person name="Venter J.C."/>
        </authorList>
    </citation>
    <scope>NUCLEOTIDE SEQUENCE [LARGE SCALE GENOMIC DNA]</scope>
</reference>
<reference key="7">
    <citation type="journal article" date="2004" name="Genome Res.">
        <title>The status, quality, and expansion of the NIH full-length cDNA project: the Mammalian Gene Collection (MGC).</title>
        <authorList>
            <consortium name="The MGC Project Team"/>
        </authorList>
    </citation>
    <scope>NUCLEOTIDE SEQUENCE [LARGE SCALE MRNA]</scope>
    <source>
        <tissue>Brain</tissue>
    </source>
</reference>
<reference key="8">
    <citation type="journal article" date="1990" name="J. Biol. Chem.">
        <title>Elafin: an elastase-specific inhibitor of human skin. Purification, characterization, and complete amino acid sequence.</title>
        <authorList>
            <person name="Wiedow O."/>
            <person name="Schroeder J.-M."/>
            <person name="Gregory H."/>
            <person name="Young J.A."/>
            <person name="Christophers E."/>
        </authorList>
    </citation>
    <scope>PROTEIN SEQUENCE OF 61-117</scope>
    <source>
        <tissue>Stratum corneum</tissue>
    </source>
</reference>
<reference key="9">
    <citation type="journal article" date="1991" name="J. Biol. Chem.">
        <authorList>
            <person name="Wiedow O."/>
            <person name="Schroeder J.-M."/>
            <person name="Gregory H."/>
            <person name="Young J.A."/>
            <person name="Christophers E."/>
        </authorList>
    </citation>
    <scope>ERRATUM OF PUBMED:2394696</scope>
</reference>
<reference key="10">
    <citation type="journal article" date="1991" name="Biol. Chem. Hoppe-Seyler">
        <title>Purification and characterization of elastase-specific inhibitor. Sequence homology with mucus proteinase inhibitor.</title>
        <authorList>
            <person name="Sallenave J.-M."/>
            <person name="Ryle A.P."/>
        </authorList>
    </citation>
    <scope>PROTEIN SEQUENCE OF 70-94</scope>
    <source>
        <tissue>Sputum</tissue>
    </source>
</reference>
<reference key="11">
    <citation type="journal article" date="1992" name="Biol. Chem. Hoppe-Seyler">
        <title>Isolation of elafin and elastase-specific inhibitor (ESI) from bronchial secretions. Evidence of sequence homology and immunological cross-reactivity.</title>
        <authorList>
            <person name="Sallenave J.-M."/>
            <person name="Marsden M.D."/>
            <person name="Ryle A.P."/>
        </authorList>
    </citation>
    <scope>PROTEIN SEQUENCE OF 61-77</scope>
    <source>
        <tissue>Sputum</tissue>
    </source>
</reference>
<reference key="12">
    <citation type="journal article" date="1991" name="Biochim. Biophys. Acta">
        <title>Skin-derived antileukoproteinase (SKALP), an elastase inhibitor from human keratinocytes. Purification and biochemical properties.</title>
        <authorList>
            <person name="Schalkwijk J."/>
            <person name="de Roo C."/>
            <person name="de Jongh G.J."/>
        </authorList>
    </citation>
    <scope>PROTEIN SEQUENCE OF 85-100</scope>
    <source>
        <tissue>Keratinocyte</tissue>
    </source>
</reference>
<reference key="13">
    <citation type="journal article" date="1996" name="Biochemistry">
        <title>Crystal structure of an elastase-specific inhibitor elafin complexed with porcine pancreatic elastase determined at 1.9-A resolution.</title>
        <authorList>
            <person name="Tsunemi M."/>
            <person name="Matsuura Y."/>
            <person name="Sakakibara S."/>
            <person name="Katsube Y."/>
        </authorList>
    </citation>
    <scope>X-RAY CRYSTALLOGRAPHY (1.9 ANGSTROMS)</scope>
    <scope>DISULFIDE BOND</scope>
</reference>
<reference key="14">
    <citation type="journal article" date="1997" name="J. Mol. Biol.">
        <title>Solution structure of R-elafin, a specific inhibitor of elastase.</title>
        <authorList>
            <person name="Francart C."/>
            <person name="Dauchez M."/>
            <person name="Alix A.J.P."/>
            <person name="Lippens G."/>
        </authorList>
    </citation>
    <scope>STRUCTURE BY NMR</scope>
    <scope>DISULFIDE BOND</scope>
</reference>
<reference key="15">
    <citation type="journal article" date="2018" name="Nat. Struct. Mol. Biol.">
        <title>Screening, large-scale production and structure-based classification of cystine-dense peptides.</title>
        <authorList>
            <person name="Correnti C.E."/>
            <person name="Gewe M.M."/>
            <person name="Mehlin C."/>
            <person name="Bandaranayake A.D."/>
            <person name="Johnsen W.A."/>
            <person name="Rupert P.B."/>
            <person name="Brusniak M.Y."/>
            <person name="Clarke M."/>
            <person name="Burke S.E."/>
            <person name="De Van Der Schueren W."/>
            <person name="Pilat K."/>
            <person name="Turnbaugh S.M."/>
            <person name="May D."/>
            <person name="Watson A."/>
            <person name="Chan M.K."/>
            <person name="Bahl C.D."/>
            <person name="Olson J.M."/>
            <person name="Strong R.K."/>
        </authorList>
    </citation>
    <scope>X-RAY CRYSTALLOGRAPHY (2.40 ANGSTROMS) OF 61-117</scope>
    <scope>SYNTHESIS OF 61-117</scope>
    <scope>DISULFIDE BONDS</scope>
    <scope>FUNCTION</scope>
</reference>
<protein>
    <recommendedName>
        <fullName>Elafin</fullName>
    </recommendedName>
    <alternativeName>
        <fullName>Elastase-specific inhibitor</fullName>
        <shortName>ESI</shortName>
    </alternativeName>
    <alternativeName>
        <fullName>Peptidase inhibitor 3</fullName>
        <shortName>PI-3</shortName>
    </alternativeName>
    <alternativeName>
        <fullName>Protease inhibitor WAP3</fullName>
    </alternativeName>
    <alternativeName>
        <fullName>Skin-derived antileukoproteinase</fullName>
        <shortName>SKALP</shortName>
    </alternativeName>
    <alternativeName>
        <fullName>WAP four-disulfide core domain protein 14</fullName>
    </alternativeName>
</protein>
<feature type="signal peptide" evidence="5">
    <location>
        <begin position="1"/>
        <end position="22"/>
    </location>
</feature>
<feature type="propeptide" id="PRO_0000041357" evidence="2 3">
    <location>
        <begin position="23"/>
        <end position="60"/>
    </location>
</feature>
<feature type="chain" id="PRO_0000041358" description="Elafin">
    <location>
        <begin position="61"/>
        <end position="117"/>
    </location>
</feature>
<feature type="repeat" description="SVP-1 clotting 1">
    <location>
        <begin position="29"/>
        <end position="54"/>
    </location>
</feature>
<feature type="repeat" description="SVP-1 clotting 2">
    <location>
        <begin position="55"/>
        <end position="72"/>
    </location>
</feature>
<feature type="domain" description="WAP" evidence="1">
    <location>
        <begin position="69"/>
        <end position="117"/>
    </location>
</feature>
<feature type="region of interest" description="2 X tandem repeats of SVP-1 like motif">
    <location>
        <begin position="29"/>
        <end position="72"/>
    </location>
</feature>
<feature type="disulfide bond" evidence="4 6 7 9 10 11">
    <location>
        <begin position="76"/>
        <end position="105"/>
    </location>
</feature>
<feature type="disulfide bond" evidence="4 6 7 9 10 11">
    <location>
        <begin position="83"/>
        <end position="109"/>
    </location>
</feature>
<feature type="disulfide bond" evidence="4 6 7 9 10 11">
    <location>
        <begin position="92"/>
        <end position="104"/>
    </location>
</feature>
<feature type="disulfide bond" evidence="4 6 7 9 10 11">
    <location>
        <begin position="98"/>
        <end position="113"/>
    </location>
</feature>
<feature type="sequence variant" id="VAR_052947" description="In dbSNP:rs17333103.">
    <original>T</original>
    <variation>M</variation>
    <location>
        <position position="17"/>
    </location>
</feature>
<feature type="sequence variant" id="VAR_024695" description="In dbSNP:rs2664581.">
    <original>T</original>
    <variation>P</variation>
    <location>
        <position position="34"/>
    </location>
</feature>
<feature type="sequence conflict" description="In Ref. 10; AA sequence." evidence="8" ref="10">
    <original>RC</original>
    <variation>CP</variation>
    <location>
        <begin position="91"/>
        <end position="92"/>
    </location>
</feature>
<feature type="strand" evidence="13">
    <location>
        <begin position="65"/>
        <end position="69"/>
    </location>
</feature>
<feature type="strand" evidence="12">
    <location>
        <begin position="73"/>
        <end position="75"/>
    </location>
</feature>
<feature type="strand" evidence="12">
    <location>
        <begin position="81"/>
        <end position="84"/>
    </location>
</feature>
<feature type="helix" evidence="12">
    <location>
        <begin position="95"/>
        <end position="97"/>
    </location>
</feature>
<feature type="strand" evidence="12">
    <location>
        <begin position="98"/>
        <end position="101"/>
    </location>
</feature>
<feature type="strand" evidence="12">
    <location>
        <begin position="103"/>
        <end position="106"/>
    </location>
</feature>
<feature type="strand" evidence="12">
    <location>
        <begin position="108"/>
        <end position="114"/>
    </location>
</feature>
<comment type="function">
    <text evidence="4">Neutrophil and pancreatic elastase-specific inhibitor of skin. It may prevent elastase-mediated tissue proteolysis. Has been shown to inhibit the alpha-4-beta-2/CHRNA2-CHRNB2 nicotinic acetylcholine receptor and to produce a weak inhibition on Kv11.1/KCNH2/ERG1 and on the transient receptor potential cation channel subfamily V member 1 (TRPV1) (PubMed:29483648).</text>
</comment>
<comment type="subcellular location">
    <subcellularLocation>
        <location>Secreted</location>
    </subcellularLocation>
</comment>
<comment type="domain">
    <text>Consists of two domains: the transglutaminase substrate domain (cementoin moiety) and the elastase inhibitor domain. The transglutaminase substrate domain serves as an anchor to localize elafin covalently to specific sites on extracellular matrix proteins.</text>
</comment>
<dbReference type="EMBL" id="Z18538">
    <property type="protein sequence ID" value="CAA79223.1"/>
    <property type="molecule type" value="mRNA"/>
</dbReference>
<dbReference type="EMBL" id="D13156">
    <property type="protein sequence ID" value="BAA02441.1"/>
    <property type="molecule type" value="Genomic_DNA"/>
</dbReference>
<dbReference type="EMBL" id="S58717">
    <property type="protein sequence ID" value="AAB26371.1"/>
    <property type="molecule type" value="Genomic_DNA"/>
</dbReference>
<dbReference type="EMBL" id="L10343">
    <property type="protein sequence ID" value="AAA36483.1"/>
    <property type="molecule type" value="Genomic_DNA"/>
</dbReference>
<dbReference type="EMBL" id="CR542234">
    <property type="protein sequence ID" value="CAG47030.1"/>
    <property type="molecule type" value="mRNA"/>
</dbReference>
<dbReference type="EMBL" id="AL049767">
    <property type="status" value="NOT_ANNOTATED_CDS"/>
    <property type="molecule type" value="Genomic_DNA"/>
</dbReference>
<dbReference type="EMBL" id="CH471077">
    <property type="protein sequence ID" value="EAW75873.1"/>
    <property type="molecule type" value="Genomic_DNA"/>
</dbReference>
<dbReference type="EMBL" id="CH471077">
    <property type="protein sequence ID" value="EAW75874.1"/>
    <property type="molecule type" value="Genomic_DNA"/>
</dbReference>
<dbReference type="EMBL" id="BC010952">
    <property type="protein sequence ID" value="AAH10952.1"/>
    <property type="molecule type" value="mRNA"/>
</dbReference>
<dbReference type="CCDS" id="CCDS13344.1"/>
<dbReference type="PIR" id="JH0614">
    <property type="entry name" value="JH0614"/>
</dbReference>
<dbReference type="RefSeq" id="NP_002629.1">
    <property type="nucleotide sequence ID" value="NM_002638.4"/>
</dbReference>
<dbReference type="PDB" id="1FLE">
    <property type="method" value="X-ray"/>
    <property type="resolution" value="1.90 A"/>
    <property type="chains" value="I=61-117"/>
</dbReference>
<dbReference type="PDB" id="2REL">
    <property type="method" value="NMR"/>
    <property type="chains" value="A=61-117"/>
</dbReference>
<dbReference type="PDB" id="6ATU">
    <property type="method" value="X-ray"/>
    <property type="resolution" value="2.40 A"/>
    <property type="chains" value="A/B/C/D/E/F/G/H/I/J/K/L/M/N/O/P/Q/R=61-117"/>
</dbReference>
<dbReference type="PDBsum" id="1FLE"/>
<dbReference type="PDBsum" id="2REL"/>
<dbReference type="PDBsum" id="6ATU"/>
<dbReference type="BMRB" id="P19957"/>
<dbReference type="SMR" id="P19957"/>
<dbReference type="BioGRID" id="111284">
    <property type="interactions" value="10"/>
</dbReference>
<dbReference type="FunCoup" id="P19957">
    <property type="interactions" value="3"/>
</dbReference>
<dbReference type="IntAct" id="P19957">
    <property type="interactions" value="4"/>
</dbReference>
<dbReference type="MINT" id="P19957"/>
<dbReference type="STRING" id="9606.ENSP00000243924"/>
<dbReference type="MEROPS" id="I17.002"/>
<dbReference type="GlyGen" id="P19957">
    <property type="glycosylation" value="1 site"/>
</dbReference>
<dbReference type="iPTMnet" id="P19957"/>
<dbReference type="PhosphoSitePlus" id="P19957"/>
<dbReference type="BioMuta" id="PI3"/>
<dbReference type="DMDM" id="119262"/>
<dbReference type="jPOST" id="P19957"/>
<dbReference type="MassIVE" id="P19957"/>
<dbReference type="PaxDb" id="9606-ENSP00000243924"/>
<dbReference type="PeptideAtlas" id="P19957"/>
<dbReference type="PRIDE" id="P19957"/>
<dbReference type="ProteomicsDB" id="53703"/>
<dbReference type="Antibodypedia" id="1726">
    <property type="antibodies" value="276 antibodies from 32 providers"/>
</dbReference>
<dbReference type="DNASU" id="5266"/>
<dbReference type="Ensembl" id="ENST00000243924.4">
    <property type="protein sequence ID" value="ENSP00000243924.3"/>
    <property type="gene ID" value="ENSG00000124102.5"/>
</dbReference>
<dbReference type="GeneID" id="5266"/>
<dbReference type="KEGG" id="hsa:5266"/>
<dbReference type="MANE-Select" id="ENST00000243924.4">
    <property type="protein sequence ID" value="ENSP00000243924.3"/>
    <property type="RefSeq nucleotide sequence ID" value="NM_002638.4"/>
    <property type="RefSeq protein sequence ID" value="NP_002629.1"/>
</dbReference>
<dbReference type="UCSC" id="uc002xng.4">
    <property type="organism name" value="human"/>
</dbReference>
<dbReference type="AGR" id="HGNC:8947"/>
<dbReference type="CTD" id="5266"/>
<dbReference type="DisGeNET" id="5266"/>
<dbReference type="GeneCards" id="PI3"/>
<dbReference type="HGNC" id="HGNC:8947">
    <property type="gene designation" value="PI3"/>
</dbReference>
<dbReference type="HPA" id="ENSG00000124102">
    <property type="expression patterns" value="Group enriched (esophagus, lymphoid tissue, vagina)"/>
</dbReference>
<dbReference type="MIM" id="182257">
    <property type="type" value="gene"/>
</dbReference>
<dbReference type="neXtProt" id="NX_P19957"/>
<dbReference type="OpenTargets" id="ENSG00000124102"/>
<dbReference type="PharmGKB" id="PA33283"/>
<dbReference type="VEuPathDB" id="HostDB:ENSG00000124102"/>
<dbReference type="eggNOG" id="ENOG502SZ79">
    <property type="taxonomic scope" value="Eukaryota"/>
</dbReference>
<dbReference type="GeneTree" id="ENSGT00530000064218"/>
<dbReference type="HOGENOM" id="CLU_149429_0_0_1"/>
<dbReference type="InParanoid" id="P19957"/>
<dbReference type="OMA" id="QCAMLNP"/>
<dbReference type="OrthoDB" id="5104187at2759"/>
<dbReference type="PAN-GO" id="P19957">
    <property type="GO annotations" value="4 GO annotations based on evolutionary models"/>
</dbReference>
<dbReference type="PhylomeDB" id="P19957"/>
<dbReference type="TreeFam" id="TF340462"/>
<dbReference type="PathwayCommons" id="P19957"/>
<dbReference type="Reactome" id="R-HSA-6803157">
    <property type="pathway name" value="Antimicrobial peptides"/>
</dbReference>
<dbReference type="Reactome" id="R-HSA-6809371">
    <property type="pathway name" value="Formation of the cornified envelope"/>
</dbReference>
<dbReference type="SignaLink" id="P19957"/>
<dbReference type="BioGRID-ORCS" id="5266">
    <property type="hits" value="13 hits in 1138 CRISPR screens"/>
</dbReference>
<dbReference type="ChiTaRS" id="PI3">
    <property type="organism name" value="human"/>
</dbReference>
<dbReference type="EvolutionaryTrace" id="P19957"/>
<dbReference type="GeneWiki" id="Elafin"/>
<dbReference type="GenomeRNAi" id="5266"/>
<dbReference type="Pharos" id="P19957">
    <property type="development level" value="Tbio"/>
</dbReference>
<dbReference type="PRO" id="PR:P19957"/>
<dbReference type="Proteomes" id="UP000005640">
    <property type="component" value="Chromosome 20"/>
</dbReference>
<dbReference type="RNAct" id="P19957">
    <property type="molecule type" value="protein"/>
</dbReference>
<dbReference type="Bgee" id="ENSG00000124102">
    <property type="expression patterns" value="Expressed in lower esophagus mucosa and 123 other cell types or tissues"/>
</dbReference>
<dbReference type="GO" id="GO:0001533">
    <property type="term" value="C:cornified envelope"/>
    <property type="evidence" value="ECO:0000314"/>
    <property type="project" value="CAFA"/>
</dbReference>
<dbReference type="GO" id="GO:0005829">
    <property type="term" value="C:cytosol"/>
    <property type="evidence" value="ECO:0000304"/>
    <property type="project" value="Reactome"/>
</dbReference>
<dbReference type="GO" id="GO:0031012">
    <property type="term" value="C:extracellular matrix"/>
    <property type="evidence" value="ECO:0000304"/>
    <property type="project" value="ProtInc"/>
</dbReference>
<dbReference type="GO" id="GO:0005576">
    <property type="term" value="C:extracellular region"/>
    <property type="evidence" value="ECO:0000304"/>
    <property type="project" value="Reactome"/>
</dbReference>
<dbReference type="GO" id="GO:0005615">
    <property type="term" value="C:extracellular space"/>
    <property type="evidence" value="ECO:0000318"/>
    <property type="project" value="GO_Central"/>
</dbReference>
<dbReference type="GO" id="GO:0004866">
    <property type="term" value="F:endopeptidase inhibitor activity"/>
    <property type="evidence" value="ECO:0000304"/>
    <property type="project" value="ProtInc"/>
</dbReference>
<dbReference type="GO" id="GO:0004867">
    <property type="term" value="F:serine-type endopeptidase inhibitor activity"/>
    <property type="evidence" value="ECO:0000318"/>
    <property type="project" value="GO_Central"/>
</dbReference>
<dbReference type="GO" id="GO:0030280">
    <property type="term" value="F:structural constituent of skin epidermis"/>
    <property type="evidence" value="ECO:0000314"/>
    <property type="project" value="CAFA"/>
</dbReference>
<dbReference type="GO" id="GO:0019731">
    <property type="term" value="P:antibacterial humoral response"/>
    <property type="evidence" value="ECO:0000318"/>
    <property type="project" value="GO_Central"/>
</dbReference>
<dbReference type="GO" id="GO:0007620">
    <property type="term" value="P:copulation"/>
    <property type="evidence" value="ECO:0007669"/>
    <property type="project" value="InterPro"/>
</dbReference>
<dbReference type="GO" id="GO:0045087">
    <property type="term" value="P:innate immune response"/>
    <property type="evidence" value="ECO:0000318"/>
    <property type="project" value="GO_Central"/>
</dbReference>
<dbReference type="GO" id="GO:0018149">
    <property type="term" value="P:peptide cross-linking"/>
    <property type="evidence" value="ECO:0000314"/>
    <property type="project" value="CAFA"/>
</dbReference>
<dbReference type="CDD" id="cd00199">
    <property type="entry name" value="WAP"/>
    <property type="match status" value="1"/>
</dbReference>
<dbReference type="FunFam" id="4.10.75.10:FF:000001">
    <property type="entry name" value="Anosmin 1"/>
    <property type="match status" value="1"/>
</dbReference>
<dbReference type="Gene3D" id="4.10.75.10">
    <property type="entry name" value="Elafin-like"/>
    <property type="match status" value="1"/>
</dbReference>
<dbReference type="InterPro" id="IPR036645">
    <property type="entry name" value="Elafin-like_sf"/>
</dbReference>
<dbReference type="InterPro" id="IPR002098">
    <property type="entry name" value="SVP_I"/>
</dbReference>
<dbReference type="InterPro" id="IPR019541">
    <property type="entry name" value="Trappin_transglut-bd_rpt"/>
</dbReference>
<dbReference type="InterPro" id="IPR008197">
    <property type="entry name" value="WAP_dom"/>
</dbReference>
<dbReference type="InterPro" id="IPR050514">
    <property type="entry name" value="WAP_four-disulfide_core"/>
</dbReference>
<dbReference type="PANTHER" id="PTHR19441:SF30">
    <property type="entry name" value="ELAFIN"/>
    <property type="match status" value="1"/>
</dbReference>
<dbReference type="PANTHER" id="PTHR19441">
    <property type="entry name" value="WHEY ACDIC PROTEIN WAP"/>
    <property type="match status" value="1"/>
</dbReference>
<dbReference type="Pfam" id="PF10511">
    <property type="entry name" value="Cementoin"/>
    <property type="match status" value="2"/>
</dbReference>
<dbReference type="Pfam" id="PF00095">
    <property type="entry name" value="WAP"/>
    <property type="match status" value="1"/>
</dbReference>
<dbReference type="PRINTS" id="PR00003">
    <property type="entry name" value="4DISULPHCORE"/>
</dbReference>
<dbReference type="SMART" id="SM00217">
    <property type="entry name" value="WAP"/>
    <property type="match status" value="1"/>
</dbReference>
<dbReference type="SUPFAM" id="SSF57256">
    <property type="entry name" value="Elafin-like"/>
    <property type="match status" value="1"/>
</dbReference>
<dbReference type="PROSITE" id="PS00313">
    <property type="entry name" value="SVP_I"/>
    <property type="match status" value="2"/>
</dbReference>
<dbReference type="PROSITE" id="PS51390">
    <property type="entry name" value="WAP"/>
    <property type="match status" value="1"/>
</dbReference>